<organism>
    <name type="scientific">Saccharolobus islandicus (strain M.16.4 / Kamchatka #3)</name>
    <name type="common">Sulfolobus islandicus</name>
    <dbReference type="NCBI Taxonomy" id="426118"/>
    <lineage>
        <taxon>Archaea</taxon>
        <taxon>Thermoproteota</taxon>
        <taxon>Thermoprotei</taxon>
        <taxon>Sulfolobales</taxon>
        <taxon>Sulfolobaceae</taxon>
        <taxon>Saccharolobus</taxon>
    </lineage>
</organism>
<dbReference type="EC" id="2.7.7.67" evidence="1"/>
<dbReference type="EMBL" id="CP001402">
    <property type="protein sequence ID" value="ACR41962.1"/>
    <property type="molecule type" value="Genomic_DNA"/>
</dbReference>
<dbReference type="RefSeq" id="WP_010923068.1">
    <property type="nucleotide sequence ID" value="NC_012726.1"/>
</dbReference>
<dbReference type="SMR" id="C4KH98"/>
<dbReference type="KEGG" id="sid:M164_1356"/>
<dbReference type="HOGENOM" id="CLU_105710_0_0_2"/>
<dbReference type="UniPathway" id="UPA00940"/>
<dbReference type="Proteomes" id="UP000001479">
    <property type="component" value="Chromosome"/>
</dbReference>
<dbReference type="GO" id="GO:0005886">
    <property type="term" value="C:plasma membrane"/>
    <property type="evidence" value="ECO:0007669"/>
    <property type="project" value="UniProtKB-SubCell"/>
</dbReference>
<dbReference type="GO" id="GO:0043338">
    <property type="term" value="F:CDP-2,3-bis-(O-geranylgeranyl)-sn-glycerol synthase activity"/>
    <property type="evidence" value="ECO:0007669"/>
    <property type="project" value="UniProtKB-EC"/>
</dbReference>
<dbReference type="GO" id="GO:0046474">
    <property type="term" value="P:glycerophospholipid biosynthetic process"/>
    <property type="evidence" value="ECO:0007669"/>
    <property type="project" value="UniProtKB-UniRule"/>
</dbReference>
<dbReference type="HAMAP" id="MF_01117">
    <property type="entry name" value="CDP_archaeol_synth"/>
    <property type="match status" value="1"/>
</dbReference>
<dbReference type="InterPro" id="IPR032690">
    <property type="entry name" value="CarS"/>
</dbReference>
<dbReference type="InterPro" id="IPR002726">
    <property type="entry name" value="CarS_archaea"/>
</dbReference>
<dbReference type="NCBIfam" id="NF003114">
    <property type="entry name" value="PRK04032.1"/>
    <property type="match status" value="1"/>
</dbReference>
<dbReference type="PANTHER" id="PTHR39650">
    <property type="entry name" value="CDP-ARCHAEOL SYNTHASE"/>
    <property type="match status" value="1"/>
</dbReference>
<dbReference type="PANTHER" id="PTHR39650:SF1">
    <property type="entry name" value="CDP-ARCHAEOL SYNTHASE"/>
    <property type="match status" value="1"/>
</dbReference>
<dbReference type="Pfam" id="PF01864">
    <property type="entry name" value="CarS-like"/>
    <property type="match status" value="1"/>
</dbReference>
<comment type="function">
    <text evidence="1">Catalyzes the formation of CDP-2,3-bis-(O-geranylgeranyl)-sn-glycerol (CDP-archaeol) from 2,3-bis-(O-geranylgeranyl)-sn-glycerol 1-phosphate (DGGGP) and CTP. This reaction is the third ether-bond-formation step in the biosynthesis of archaeal membrane lipids.</text>
</comment>
<comment type="catalytic activity">
    <reaction evidence="1">
        <text>2,3-bis-O-(geranylgeranyl)-sn-glycerol 1-phosphate + CTP + H(+) = CDP-2,3-bis-O-(geranylgeranyl)-sn-glycerol + diphosphate</text>
        <dbReference type="Rhea" id="RHEA:25690"/>
        <dbReference type="ChEBI" id="CHEBI:15378"/>
        <dbReference type="ChEBI" id="CHEBI:33019"/>
        <dbReference type="ChEBI" id="CHEBI:37563"/>
        <dbReference type="ChEBI" id="CHEBI:58837"/>
        <dbReference type="ChEBI" id="CHEBI:58838"/>
        <dbReference type="EC" id="2.7.7.67"/>
    </reaction>
</comment>
<comment type="cofactor">
    <cofactor evidence="1">
        <name>Mg(2+)</name>
        <dbReference type="ChEBI" id="CHEBI:18420"/>
    </cofactor>
</comment>
<comment type="pathway">
    <text evidence="1">Membrane lipid metabolism; glycerophospholipid metabolism.</text>
</comment>
<comment type="subcellular location">
    <subcellularLocation>
        <location evidence="1">Cell membrane</location>
        <topology evidence="1">Multi-pass membrane protein</topology>
    </subcellularLocation>
</comment>
<comment type="similarity">
    <text evidence="1">Belongs to the CDP-archaeol synthase family.</text>
</comment>
<feature type="chain" id="PRO_1000213606" description="CDP-archaeol synthase">
    <location>
        <begin position="1"/>
        <end position="166"/>
    </location>
</feature>
<feature type="transmembrane region" description="Helical" evidence="1">
    <location>
        <begin position="7"/>
        <end position="27"/>
    </location>
</feature>
<feature type="transmembrane region" description="Helical" evidence="1">
    <location>
        <begin position="55"/>
        <end position="75"/>
    </location>
</feature>
<feature type="transmembrane region" description="Helical" evidence="1">
    <location>
        <begin position="78"/>
        <end position="98"/>
    </location>
</feature>
<feature type="transmembrane region" description="Helical" evidence="1">
    <location>
        <begin position="116"/>
        <end position="136"/>
    </location>
</feature>
<feature type="transmembrane region" description="Helical" evidence="1">
    <location>
        <begin position="138"/>
        <end position="158"/>
    </location>
</feature>
<name>CDPAS_SACI6</name>
<evidence type="ECO:0000255" key="1">
    <source>
        <dbReference type="HAMAP-Rule" id="MF_01117"/>
    </source>
</evidence>
<reference key="1">
    <citation type="journal article" date="2009" name="Proc. Natl. Acad. Sci. U.S.A.">
        <title>Biogeography of the Sulfolobus islandicus pan-genome.</title>
        <authorList>
            <person name="Reno M.L."/>
            <person name="Held N.L."/>
            <person name="Fields C.J."/>
            <person name="Burke P.V."/>
            <person name="Whitaker R.J."/>
        </authorList>
    </citation>
    <scope>NUCLEOTIDE SEQUENCE [LARGE SCALE GENOMIC DNA]</scope>
    <source>
        <strain>M.16.4 / Kamchatka #3</strain>
    </source>
</reference>
<sequence length="166" mass="18484">MSIAYDLLLSILIYLPAFVANGSGPFIKRGTPIDFGKNFVDGRRLFGDGKTFEGLIVALTFGTTVGVIISKFFTAEWTLISFLESLFAMIGDMIGAFIKRRLGIPRGGRVLGLDQLDFVLGASLILVLMRVNITWYQFLFICGLAFFLHQGTNYVAYLLKIKNVPW</sequence>
<gene>
    <name evidence="1" type="primary">carS</name>
    <name type="ordered locus">M164_1356</name>
</gene>
<keyword id="KW-1003">Cell membrane</keyword>
<keyword id="KW-0444">Lipid biosynthesis</keyword>
<keyword id="KW-0443">Lipid metabolism</keyword>
<keyword id="KW-0460">Magnesium</keyword>
<keyword id="KW-0472">Membrane</keyword>
<keyword id="KW-0594">Phospholipid biosynthesis</keyword>
<keyword id="KW-1208">Phospholipid metabolism</keyword>
<keyword id="KW-0808">Transferase</keyword>
<keyword id="KW-0812">Transmembrane</keyword>
<keyword id="KW-1133">Transmembrane helix</keyword>
<proteinExistence type="inferred from homology"/>
<protein>
    <recommendedName>
        <fullName evidence="1">CDP-archaeol synthase</fullName>
        <ecNumber evidence="1">2.7.7.67</ecNumber>
    </recommendedName>
    <alternativeName>
        <fullName evidence="1">CDP-2,3-bis-(O-geranylgeranyl)-sn-glycerol synthase</fullName>
    </alternativeName>
</protein>
<accession>C4KH98</accession>